<evidence type="ECO:0000250" key="1">
    <source>
        <dbReference type="UniProtKB" id="Q99257"/>
    </source>
</evidence>
<evidence type="ECO:0000255" key="2"/>
<evidence type="ECO:0000255" key="3">
    <source>
        <dbReference type="PROSITE-ProRule" id="PRU00137"/>
    </source>
</evidence>
<evidence type="ECO:0000255" key="4">
    <source>
        <dbReference type="PROSITE-ProRule" id="PRU00611"/>
    </source>
</evidence>
<evidence type="ECO:0000256" key="5">
    <source>
        <dbReference type="SAM" id="MobiDB-lite"/>
    </source>
</evidence>
<evidence type="ECO:0000269" key="6">
    <source>
    </source>
</evidence>
<evidence type="ECO:0007829" key="7">
    <source>
        <dbReference type="PDB" id="1Q40"/>
    </source>
</evidence>
<keyword id="KW-0002">3D-structure</keyword>
<keyword id="KW-0963">Cytoplasm</keyword>
<keyword id="KW-0433">Leucine-rich repeat</keyword>
<keyword id="KW-0509">mRNA transport</keyword>
<keyword id="KW-0539">Nucleus</keyword>
<keyword id="KW-1185">Reference proteome</keyword>
<keyword id="KW-0677">Repeat</keyword>
<keyword id="KW-0813">Transport</keyword>
<comment type="function">
    <text evidence="1 4">Involved in the export of mRNA from the nucleus to the cytoplasm.</text>
</comment>
<comment type="subunit">
    <text evidence="6">Interacts with nucleoporin complex protein MTR2.</text>
</comment>
<comment type="subcellular location">
    <subcellularLocation>
        <location evidence="4">Nucleus</location>
    </subcellularLocation>
    <subcellularLocation>
        <location evidence="4">Cytoplasm</location>
    </subcellularLocation>
    <text evidence="4">Localizes at both the nuclear and cytoplasmic site of the pores. Shuttles between the nucleus and the cytoplasm.</text>
</comment>
<comment type="domain">
    <text evidence="1 6">The NTF2 domain heterodimerizes with MTR2. The formation of this heterodimer is essential for mRNA export and binds to all of the nucleoporin-FG-repeats.</text>
</comment>
<comment type="domain">
    <text>The RNA-binding domain is conserved in most NXF proteins but may be absent in yeasts.</text>
</comment>
<comment type="similarity">
    <text evidence="2">Belongs to the NXF family.</text>
</comment>
<proteinExistence type="evidence at protein level"/>
<dbReference type="EMBL" id="CP017630">
    <property type="protein sequence ID" value="AOW31143.1"/>
    <property type="molecule type" value="Genomic_DNA"/>
</dbReference>
<dbReference type="RefSeq" id="XP_717351.1">
    <property type="nucleotide sequence ID" value="XM_712258.2"/>
</dbReference>
<dbReference type="PDB" id="1Q40">
    <property type="method" value="X-ray"/>
    <property type="resolution" value="1.95 A"/>
    <property type="chains" value="B/D=295-512"/>
</dbReference>
<dbReference type="PDBsum" id="1Q40"/>
<dbReference type="SMR" id="P84149"/>
<dbReference type="BioGRID" id="1224015">
    <property type="interactions" value="1"/>
</dbReference>
<dbReference type="FunCoup" id="P84149">
    <property type="interactions" value="541"/>
</dbReference>
<dbReference type="STRING" id="237561.P84149"/>
<dbReference type="EnsemblFungi" id="CR_04050C_A-T">
    <property type="protein sequence ID" value="CR_04050C_A-T-p1"/>
    <property type="gene ID" value="CR_04050C_A"/>
</dbReference>
<dbReference type="GeneID" id="3641020"/>
<dbReference type="KEGG" id="cal:CAALFM_CR04050CA"/>
<dbReference type="CGD" id="CAL0000181331">
    <property type="gene designation" value="MEX67"/>
</dbReference>
<dbReference type="VEuPathDB" id="FungiDB:CR_04050C_A"/>
<dbReference type="eggNOG" id="KOG3763">
    <property type="taxonomic scope" value="Eukaryota"/>
</dbReference>
<dbReference type="HOGENOM" id="CLU_024991_1_1_1"/>
<dbReference type="InParanoid" id="P84149"/>
<dbReference type="OMA" id="YGGHEAW"/>
<dbReference type="OrthoDB" id="25872at2759"/>
<dbReference type="EvolutionaryTrace" id="P84149"/>
<dbReference type="PRO" id="PR:P84149"/>
<dbReference type="Proteomes" id="UP000000559">
    <property type="component" value="Chromosome R"/>
</dbReference>
<dbReference type="GO" id="GO:0005737">
    <property type="term" value="C:cytoplasm"/>
    <property type="evidence" value="ECO:0007669"/>
    <property type="project" value="UniProtKB-SubCell"/>
</dbReference>
<dbReference type="GO" id="GO:0005643">
    <property type="term" value="C:nuclear pore"/>
    <property type="evidence" value="ECO:0007669"/>
    <property type="project" value="EnsemblFungi"/>
</dbReference>
<dbReference type="GO" id="GO:0042272">
    <property type="term" value="C:nuclear RNA export factor complex"/>
    <property type="evidence" value="ECO:0007669"/>
    <property type="project" value="EnsemblFungi"/>
</dbReference>
<dbReference type="GO" id="GO:0005634">
    <property type="term" value="C:nucleus"/>
    <property type="evidence" value="ECO:0000318"/>
    <property type="project" value="GO_Central"/>
</dbReference>
<dbReference type="GO" id="GO:0015288">
    <property type="term" value="F:porin activity"/>
    <property type="evidence" value="ECO:0007669"/>
    <property type="project" value="EnsemblFungi"/>
</dbReference>
<dbReference type="GO" id="GO:0003723">
    <property type="term" value="F:RNA binding"/>
    <property type="evidence" value="ECO:0000318"/>
    <property type="project" value="GO_Central"/>
</dbReference>
<dbReference type="GO" id="GO:0000049">
    <property type="term" value="F:tRNA binding"/>
    <property type="evidence" value="ECO:0007669"/>
    <property type="project" value="EnsemblFungi"/>
</dbReference>
<dbReference type="GO" id="GO:0030619">
    <property type="term" value="F:U1 snRNA binding"/>
    <property type="evidence" value="ECO:0007669"/>
    <property type="project" value="EnsemblFungi"/>
</dbReference>
<dbReference type="GO" id="GO:0030620">
    <property type="term" value="F:U2 snRNA binding"/>
    <property type="evidence" value="ECO:0007669"/>
    <property type="project" value="EnsemblFungi"/>
</dbReference>
<dbReference type="GO" id="GO:0030621">
    <property type="term" value="F:U4 snRNA binding"/>
    <property type="evidence" value="ECO:0007669"/>
    <property type="project" value="EnsemblFungi"/>
</dbReference>
<dbReference type="GO" id="GO:0030623">
    <property type="term" value="F:U5 snRNA binding"/>
    <property type="evidence" value="ECO:0007669"/>
    <property type="project" value="EnsemblFungi"/>
</dbReference>
<dbReference type="GO" id="GO:0017070">
    <property type="term" value="F:U6 snRNA binding"/>
    <property type="evidence" value="ECO:0007669"/>
    <property type="project" value="EnsemblFungi"/>
</dbReference>
<dbReference type="GO" id="GO:0016973">
    <property type="term" value="P:poly(A)+ mRNA export from nucleus"/>
    <property type="evidence" value="ECO:0000318"/>
    <property type="project" value="GO_Central"/>
</dbReference>
<dbReference type="GO" id="GO:0000055">
    <property type="term" value="P:ribosomal large subunit export from nucleus"/>
    <property type="evidence" value="ECO:0007669"/>
    <property type="project" value="EnsemblFungi"/>
</dbReference>
<dbReference type="GO" id="GO:0000056">
    <property type="term" value="P:ribosomal small subunit export from nucleus"/>
    <property type="evidence" value="ECO:0007669"/>
    <property type="project" value="EnsemblFungi"/>
</dbReference>
<dbReference type="GO" id="GO:0008033">
    <property type="term" value="P:tRNA processing"/>
    <property type="evidence" value="ECO:0007669"/>
    <property type="project" value="EnsemblFungi"/>
</dbReference>
<dbReference type="GO" id="GO:0071528">
    <property type="term" value="P:tRNA re-export from nucleus"/>
    <property type="evidence" value="ECO:0007669"/>
    <property type="project" value="EnsemblFungi"/>
</dbReference>
<dbReference type="CDD" id="cd14342">
    <property type="entry name" value="UBA_TAP-C"/>
    <property type="match status" value="1"/>
</dbReference>
<dbReference type="FunFam" id="3.10.450.50:FF:000070">
    <property type="entry name" value="mRNA export factor MEX67"/>
    <property type="match status" value="1"/>
</dbReference>
<dbReference type="FunFam" id="3.80.10.10:FF:000296">
    <property type="entry name" value="mRNA export factor MEX67"/>
    <property type="match status" value="1"/>
</dbReference>
<dbReference type="Gene3D" id="3.10.450.50">
    <property type="match status" value="1"/>
</dbReference>
<dbReference type="Gene3D" id="1.10.8.10">
    <property type="entry name" value="DNA helicase RuvA subunit, C-terminal domain"/>
    <property type="match status" value="1"/>
</dbReference>
<dbReference type="Gene3D" id="3.80.10.10">
    <property type="entry name" value="Ribonuclease Inhibitor"/>
    <property type="match status" value="1"/>
</dbReference>
<dbReference type="InterPro" id="IPR001611">
    <property type="entry name" value="Leu-rich_rpt"/>
</dbReference>
<dbReference type="InterPro" id="IPR032675">
    <property type="entry name" value="LRR_dom_sf"/>
</dbReference>
<dbReference type="InterPro" id="IPR040736">
    <property type="entry name" value="Mex67_RRM"/>
</dbReference>
<dbReference type="InterPro" id="IPR032710">
    <property type="entry name" value="NTF2-like_dom_sf"/>
</dbReference>
<dbReference type="InterPro" id="IPR002075">
    <property type="entry name" value="NTF2_dom"/>
</dbReference>
<dbReference type="InterPro" id="IPR018222">
    <property type="entry name" value="Nuclear_transport_factor_2_euk"/>
</dbReference>
<dbReference type="InterPro" id="IPR030217">
    <property type="entry name" value="NXF_fam"/>
</dbReference>
<dbReference type="InterPro" id="IPR005637">
    <property type="entry name" value="TAP_C_dom"/>
</dbReference>
<dbReference type="InterPro" id="IPR009060">
    <property type="entry name" value="UBA-like_sf"/>
</dbReference>
<dbReference type="PANTHER" id="PTHR10662">
    <property type="entry name" value="NUCLEAR RNA EXPORT FACTOR"/>
    <property type="match status" value="1"/>
</dbReference>
<dbReference type="PANTHER" id="PTHR10662:SF22">
    <property type="entry name" value="NUCLEAR RNA EXPORT FACTOR 1"/>
    <property type="match status" value="1"/>
</dbReference>
<dbReference type="Pfam" id="PF24048">
    <property type="entry name" value="LRR_NXF1-5"/>
    <property type="match status" value="1"/>
</dbReference>
<dbReference type="Pfam" id="PF22602">
    <property type="entry name" value="NXF_NTF2"/>
    <property type="match status" value="1"/>
</dbReference>
<dbReference type="Pfam" id="PF18444">
    <property type="entry name" value="RRM_9"/>
    <property type="match status" value="1"/>
</dbReference>
<dbReference type="Pfam" id="PF03943">
    <property type="entry name" value="TAP_C"/>
    <property type="match status" value="1"/>
</dbReference>
<dbReference type="SMART" id="SM00804">
    <property type="entry name" value="TAP_C"/>
    <property type="match status" value="1"/>
</dbReference>
<dbReference type="SUPFAM" id="SSF52058">
    <property type="entry name" value="L domain-like"/>
    <property type="match status" value="1"/>
</dbReference>
<dbReference type="SUPFAM" id="SSF54427">
    <property type="entry name" value="NTF2-like"/>
    <property type="match status" value="1"/>
</dbReference>
<dbReference type="SUPFAM" id="SSF46934">
    <property type="entry name" value="UBA-like"/>
    <property type="match status" value="1"/>
</dbReference>
<dbReference type="PROSITE" id="PS51450">
    <property type="entry name" value="LRR"/>
    <property type="match status" value="3"/>
</dbReference>
<dbReference type="PROSITE" id="PS50177">
    <property type="entry name" value="NTF2_DOMAIN"/>
    <property type="match status" value="1"/>
</dbReference>
<dbReference type="PROSITE" id="PS51281">
    <property type="entry name" value="TAP_C"/>
    <property type="match status" value="1"/>
</dbReference>
<reference key="1">
    <citation type="journal article" date="2004" name="Proc. Natl. Acad. Sci. U.S.A.">
        <title>The diploid genome sequence of Candida albicans.</title>
        <authorList>
            <person name="Jones T."/>
            <person name="Federspiel N.A."/>
            <person name="Chibana H."/>
            <person name="Dungan J."/>
            <person name="Kalman S."/>
            <person name="Magee B.B."/>
            <person name="Newport G."/>
            <person name="Thorstenson Y.R."/>
            <person name="Agabian N."/>
            <person name="Magee P.T."/>
            <person name="Davis R.W."/>
            <person name="Scherer S."/>
        </authorList>
    </citation>
    <scope>NUCLEOTIDE SEQUENCE [LARGE SCALE GENOMIC DNA]</scope>
    <source>
        <strain>SC5314 / ATCC MYA-2876</strain>
    </source>
</reference>
<reference key="2">
    <citation type="journal article" date="2007" name="Genome Biol.">
        <title>Assembly of the Candida albicans genome into sixteen supercontigs aligned on the eight chromosomes.</title>
        <authorList>
            <person name="van het Hoog M."/>
            <person name="Rast T.J."/>
            <person name="Martchenko M."/>
            <person name="Grindle S."/>
            <person name="Dignard D."/>
            <person name="Hogues H."/>
            <person name="Cuomo C."/>
            <person name="Berriman M."/>
            <person name="Scherer S."/>
            <person name="Magee B.B."/>
            <person name="Whiteway M."/>
            <person name="Chibana H."/>
            <person name="Nantel A."/>
            <person name="Magee P.T."/>
        </authorList>
    </citation>
    <scope>GENOME REANNOTATION</scope>
    <source>
        <strain>SC5314 / ATCC MYA-2876</strain>
    </source>
</reference>
<reference key="3">
    <citation type="journal article" date="2013" name="Genome Biol.">
        <title>Assembly of a phased diploid Candida albicans genome facilitates allele-specific measurements and provides a simple model for repeat and indel structure.</title>
        <authorList>
            <person name="Muzzey D."/>
            <person name="Schwartz K."/>
            <person name="Weissman J.S."/>
            <person name="Sherlock G."/>
        </authorList>
    </citation>
    <scope>NUCLEOTIDE SEQUENCE [LARGE SCALE GENOMIC DNA]</scope>
    <scope>GENOME REANNOTATION</scope>
    <source>
        <strain>SC5314 / ATCC MYA-2876</strain>
    </source>
</reference>
<reference key="4">
    <citation type="journal article" date="2003" name="J. Biol. Chem.">
        <title>The Mtr2-Mex67 NTF2-like domain complex. Structural insights into a dual role of Mtr2 for yeast nuclear export.</title>
        <authorList>
            <person name="Senay C."/>
            <person name="Ferrari P."/>
            <person name="Rocher C."/>
            <person name="Rieger K.J."/>
            <person name="Winter J."/>
            <person name="Platel D."/>
            <person name="Bourne Y."/>
        </authorList>
    </citation>
    <scope>X-RAY CRYSTALLOGRAPHY (1.75 ANGSTROMS) OF 295-512 IN COMPLEX WITH MTR2</scope>
</reference>
<feature type="chain" id="PRO_0000220540" description="mRNA export factor MEX67">
    <location>
        <begin position="1"/>
        <end position="617"/>
    </location>
</feature>
<feature type="repeat" description="LRR 1">
    <location>
        <begin position="185"/>
        <end position="206"/>
    </location>
</feature>
<feature type="repeat" description="LRR 2">
    <location>
        <begin position="211"/>
        <end position="232"/>
    </location>
</feature>
<feature type="repeat" description="LRR 3">
    <location>
        <begin position="237"/>
        <end position="258"/>
    </location>
</feature>
<feature type="domain" description="NTF2" evidence="3">
    <location>
        <begin position="309"/>
        <end position="499"/>
    </location>
</feature>
<feature type="domain" description="TAP-C" evidence="4">
    <location>
        <begin position="565"/>
        <end position="617"/>
    </location>
</feature>
<feature type="region of interest" description="Disordered" evidence="5">
    <location>
        <begin position="1"/>
        <end position="24"/>
    </location>
</feature>
<feature type="region of interest" description="Disordered" evidence="5">
    <location>
        <begin position="442"/>
        <end position="469"/>
    </location>
</feature>
<feature type="region of interest" description="Disordered" evidence="5">
    <location>
        <begin position="513"/>
        <end position="554"/>
    </location>
</feature>
<feature type="compositionally biased region" description="Gly residues" evidence="5">
    <location>
        <begin position="1"/>
        <end position="10"/>
    </location>
</feature>
<feature type="compositionally biased region" description="Low complexity" evidence="5">
    <location>
        <begin position="445"/>
        <end position="459"/>
    </location>
</feature>
<feature type="compositionally biased region" description="Low complexity" evidence="5">
    <location>
        <begin position="526"/>
        <end position="542"/>
    </location>
</feature>
<feature type="helix" evidence="7">
    <location>
        <begin position="307"/>
        <end position="322"/>
    </location>
</feature>
<feature type="helix" evidence="7">
    <location>
        <begin position="325"/>
        <end position="331"/>
    </location>
</feature>
<feature type="strand" evidence="7">
    <location>
        <begin position="337"/>
        <end position="342"/>
    </location>
</feature>
<feature type="turn" evidence="7">
    <location>
        <begin position="364"/>
        <end position="369"/>
    </location>
</feature>
<feature type="turn" evidence="7">
    <location>
        <begin position="373"/>
        <end position="375"/>
    </location>
</feature>
<feature type="helix" evidence="7">
    <location>
        <begin position="379"/>
        <end position="384"/>
    </location>
</feature>
<feature type="helix" evidence="7">
    <location>
        <begin position="389"/>
        <end position="398"/>
    </location>
</feature>
<feature type="strand" evidence="7">
    <location>
        <begin position="402"/>
        <end position="404"/>
    </location>
</feature>
<feature type="turn" evidence="7">
    <location>
        <begin position="407"/>
        <end position="409"/>
    </location>
</feature>
<feature type="helix" evidence="7">
    <location>
        <begin position="411"/>
        <end position="413"/>
    </location>
</feature>
<feature type="strand" evidence="7">
    <location>
        <begin position="415"/>
        <end position="420"/>
    </location>
</feature>
<feature type="strand" evidence="7">
    <location>
        <begin position="427"/>
        <end position="439"/>
    </location>
</feature>
<feature type="strand" evidence="7">
    <location>
        <begin position="460"/>
        <end position="464"/>
    </location>
</feature>
<feature type="strand" evidence="7">
    <location>
        <begin position="474"/>
        <end position="483"/>
    </location>
</feature>
<feature type="strand" evidence="7">
    <location>
        <begin position="491"/>
        <end position="501"/>
    </location>
</feature>
<protein>
    <recommendedName>
        <fullName>mRNA export factor MEX67</fullName>
    </recommendedName>
</protein>
<gene>
    <name evidence="1" type="primary">MEX67</name>
    <name type="ordered locus">CAALFM_CR04050CA</name>
    <name type="ORF">CaO19.488</name>
    <name type="ORF">CaO19.8118</name>
</gene>
<organism>
    <name type="scientific">Candida albicans (strain SC5314 / ATCC MYA-2876)</name>
    <name type="common">Yeast</name>
    <dbReference type="NCBI Taxonomy" id="237561"/>
    <lineage>
        <taxon>Eukaryota</taxon>
        <taxon>Fungi</taxon>
        <taxon>Dikarya</taxon>
        <taxon>Ascomycota</taxon>
        <taxon>Saccharomycotina</taxon>
        <taxon>Pichiomycetes</taxon>
        <taxon>Debaryomycetaceae</taxon>
        <taxon>Candida/Lodderomyces clade</taxon>
        <taxon>Candida</taxon>
    </lineage>
</organism>
<name>MEX67_CANAL</name>
<sequence>MSYRGRGGGYNNNRGQFSSGPHQHQQNVDSFVAANQYPIEIMGWNGASSGECINFISRKCKVIVSNYSVDSNSGVLKGYVKNESQANTLLNWSGVKFAGQSLRFSKGVSNISNQMGGGASTGSQSTIETISQFLKARYQPEIKMLNLSNVKQDPTLTAQGFFGSLSVSSKFFPALMKVASDLKLDVDSIDLSNNELQDLQTLTSMAQTFPKLQNLSLQNNNFTKIKVFETWRHKLNFLRELILFNNPIVQTNDPAEIQTIKLELMKSFPRLVVLSGEILRNEQVLIANLSFPFESPETMFFQDEDSRNLATNFIANYLKLWDANRSELMILYQNESQFSMQVDSSHPHLIESGNSGYSGSTDFGYYLNNSRNLTRVSSIKARMAKLSIGQEQIYKSFQQLPKTRHDIIATPELFSMEVYKFPTLNGIMITLHGSFDEVAQPEVDGSASSAPSGPRGGSRYHSGPKHKRIPLSKKSFDRTFVVIPGPNGSMIVASDTLLIRPYTSDFPWKVQKLPSNPTAATPGVSATSTPSPLPPTTITTPQLAPPGTGPTTADLPADIKARLNQIQQELLVKILLETKLNINYGIMLCEQSNWDYQQASVNFKNSAASLPSDAFVQ</sequence>
<accession>P84149</accession>
<accession>A0A1D8PSN9</accession>
<accession>Q5A6R6</accession>